<sequence>MSERIIMDDAAIQRTVTRIAHEILEYNKGTDNLILLGIKTRGEYLANRIQDKIHQIEQQRIPTGTIDITYFRDDIEHMSSLTTKDAIDIDTDITDKVVIIIDDVLYTGRTVRASLDAILLNARPIKIGLAALVDRGHRELPIRADFVGKNIPTSKEETVSVYLEEMDQRNAVIIK</sequence>
<keyword id="KW-0328">Glycosyltransferase</keyword>
<keyword id="KW-0694">RNA-binding</keyword>
<keyword id="KW-0804">Transcription</keyword>
<keyword id="KW-0805">Transcription regulation</keyword>
<keyword id="KW-0806">Transcription termination</keyword>
<keyword id="KW-0808">Transferase</keyword>
<evidence type="ECO:0000250" key="1"/>
<evidence type="ECO:0000255" key="2">
    <source>
        <dbReference type="HAMAP-Rule" id="MF_01219"/>
    </source>
</evidence>
<gene>
    <name evidence="2" type="primary">pyrR</name>
    <name type="ordered locus">SAV1198</name>
</gene>
<name>PYRR_STAAM</name>
<reference key="1">
    <citation type="journal article" date="2001" name="Lancet">
        <title>Whole genome sequencing of meticillin-resistant Staphylococcus aureus.</title>
        <authorList>
            <person name="Kuroda M."/>
            <person name="Ohta T."/>
            <person name="Uchiyama I."/>
            <person name="Baba T."/>
            <person name="Yuzawa H."/>
            <person name="Kobayashi I."/>
            <person name="Cui L."/>
            <person name="Oguchi A."/>
            <person name="Aoki K."/>
            <person name="Nagai Y."/>
            <person name="Lian J.-Q."/>
            <person name="Ito T."/>
            <person name="Kanamori M."/>
            <person name="Matsumaru H."/>
            <person name="Maruyama A."/>
            <person name="Murakami H."/>
            <person name="Hosoyama A."/>
            <person name="Mizutani-Ui Y."/>
            <person name="Takahashi N.K."/>
            <person name="Sawano T."/>
            <person name="Inoue R."/>
            <person name="Kaito C."/>
            <person name="Sekimizu K."/>
            <person name="Hirakawa H."/>
            <person name="Kuhara S."/>
            <person name="Goto S."/>
            <person name="Yabuzaki J."/>
            <person name="Kanehisa M."/>
            <person name="Yamashita A."/>
            <person name="Oshima K."/>
            <person name="Furuya K."/>
            <person name="Yoshino C."/>
            <person name="Shiba T."/>
            <person name="Hattori M."/>
            <person name="Ogasawara N."/>
            <person name="Hayashi H."/>
            <person name="Hiramatsu K."/>
        </authorList>
    </citation>
    <scope>NUCLEOTIDE SEQUENCE [LARGE SCALE GENOMIC DNA]</scope>
    <source>
        <strain>Mu50 / ATCC 700699</strain>
    </source>
</reference>
<organism>
    <name type="scientific">Staphylococcus aureus (strain Mu50 / ATCC 700699)</name>
    <dbReference type="NCBI Taxonomy" id="158878"/>
    <lineage>
        <taxon>Bacteria</taxon>
        <taxon>Bacillati</taxon>
        <taxon>Bacillota</taxon>
        <taxon>Bacilli</taxon>
        <taxon>Bacillales</taxon>
        <taxon>Staphylococcaceae</taxon>
        <taxon>Staphylococcus</taxon>
    </lineage>
</organism>
<proteinExistence type="inferred from homology"/>
<feature type="chain" id="PRO_0000183054" description="Bifunctional protein PyrR">
    <location>
        <begin position="1"/>
        <end position="175"/>
    </location>
</feature>
<feature type="short sequence motif" description="PRPP-binding" evidence="2">
    <location>
        <begin position="98"/>
        <end position="110"/>
    </location>
</feature>
<feature type="binding site" evidence="1">
    <location>
        <begin position="40"/>
        <end position="41"/>
    </location>
    <ligand>
        <name>substrate</name>
    </ligand>
</feature>
<feature type="binding site" evidence="1">
    <location>
        <begin position="102"/>
        <end position="110"/>
    </location>
    <ligand>
        <name>substrate</name>
    </ligand>
</feature>
<feature type="binding site" evidence="1">
    <location>
        <position position="135"/>
    </location>
    <ligand>
        <name>substrate</name>
    </ligand>
</feature>
<feature type="binding site" evidence="1">
    <location>
        <position position="159"/>
    </location>
    <ligand>
        <name>substrate</name>
    </ligand>
</feature>
<accession>P65943</accession>
<accession>P59012</accession>
<accession>Q99US0</accession>
<dbReference type="EC" id="2.4.2.9" evidence="2"/>
<dbReference type="EMBL" id="BA000017">
    <property type="protein sequence ID" value="BAB57360.1"/>
    <property type="molecule type" value="Genomic_DNA"/>
</dbReference>
<dbReference type="RefSeq" id="WP_000003870.1">
    <property type="nucleotide sequence ID" value="NC_002758.2"/>
</dbReference>
<dbReference type="SMR" id="P65943"/>
<dbReference type="KEGG" id="sav:SAV1198"/>
<dbReference type="HOGENOM" id="CLU_094234_2_1_9"/>
<dbReference type="PhylomeDB" id="P65943"/>
<dbReference type="Proteomes" id="UP000002481">
    <property type="component" value="Chromosome"/>
</dbReference>
<dbReference type="GO" id="GO:0003723">
    <property type="term" value="F:RNA binding"/>
    <property type="evidence" value="ECO:0007669"/>
    <property type="project" value="UniProtKB-UniRule"/>
</dbReference>
<dbReference type="GO" id="GO:0004845">
    <property type="term" value="F:uracil phosphoribosyltransferase activity"/>
    <property type="evidence" value="ECO:0007669"/>
    <property type="project" value="UniProtKB-UniRule"/>
</dbReference>
<dbReference type="GO" id="GO:0006353">
    <property type="term" value="P:DNA-templated transcription termination"/>
    <property type="evidence" value="ECO:0007669"/>
    <property type="project" value="UniProtKB-UniRule"/>
</dbReference>
<dbReference type="CDD" id="cd06223">
    <property type="entry name" value="PRTases_typeI"/>
    <property type="match status" value="1"/>
</dbReference>
<dbReference type="FunFam" id="3.40.50.2020:FF:000020">
    <property type="entry name" value="Bifunctional protein PyrR"/>
    <property type="match status" value="1"/>
</dbReference>
<dbReference type="Gene3D" id="3.40.50.2020">
    <property type="match status" value="1"/>
</dbReference>
<dbReference type="HAMAP" id="MF_01219">
    <property type="entry name" value="PyrR"/>
    <property type="match status" value="1"/>
</dbReference>
<dbReference type="InterPro" id="IPR000836">
    <property type="entry name" value="PRibTrfase_dom"/>
</dbReference>
<dbReference type="InterPro" id="IPR029057">
    <property type="entry name" value="PRTase-like"/>
</dbReference>
<dbReference type="InterPro" id="IPR023050">
    <property type="entry name" value="PyrR"/>
</dbReference>
<dbReference type="InterPro" id="IPR050137">
    <property type="entry name" value="PyrR_bifunctional"/>
</dbReference>
<dbReference type="NCBIfam" id="NF003546">
    <property type="entry name" value="PRK05205.1-2"/>
    <property type="match status" value="1"/>
</dbReference>
<dbReference type="NCBIfam" id="NF003548">
    <property type="entry name" value="PRK05205.1-4"/>
    <property type="match status" value="1"/>
</dbReference>
<dbReference type="NCBIfam" id="NF003549">
    <property type="entry name" value="PRK05205.1-5"/>
    <property type="match status" value="1"/>
</dbReference>
<dbReference type="PANTHER" id="PTHR11608">
    <property type="entry name" value="BIFUNCTIONAL PROTEIN PYRR"/>
    <property type="match status" value="1"/>
</dbReference>
<dbReference type="PANTHER" id="PTHR11608:SF0">
    <property type="entry name" value="BIFUNCTIONAL PROTEIN PYRR"/>
    <property type="match status" value="1"/>
</dbReference>
<dbReference type="Pfam" id="PF00156">
    <property type="entry name" value="Pribosyltran"/>
    <property type="match status" value="1"/>
</dbReference>
<dbReference type="SUPFAM" id="SSF53271">
    <property type="entry name" value="PRTase-like"/>
    <property type="match status" value="1"/>
</dbReference>
<protein>
    <recommendedName>
        <fullName evidence="2">Bifunctional protein PyrR</fullName>
    </recommendedName>
    <domain>
        <recommendedName>
            <fullName evidence="2">Pyrimidine operon regulatory protein</fullName>
        </recommendedName>
    </domain>
    <domain>
        <recommendedName>
            <fullName evidence="2">Uracil phosphoribosyltransferase</fullName>
            <shortName evidence="2">UPRTase</shortName>
            <ecNumber evidence="2">2.4.2.9</ecNumber>
        </recommendedName>
    </domain>
</protein>
<comment type="function">
    <text evidence="2">Regulates transcriptional attenuation of the pyrimidine nucleotide (pyr) operon by binding in a uridine-dependent manner to specific sites on pyr mRNA. This disrupts an antiterminator hairpin in the RNA and favors formation of a downstream transcription terminator, leading to a reduced expression of downstream genes.</text>
</comment>
<comment type="function">
    <text evidence="2">Also displays a weak uracil phosphoribosyltransferase activity which is not physiologically significant.</text>
</comment>
<comment type="catalytic activity">
    <reaction evidence="2">
        <text>UMP + diphosphate = 5-phospho-alpha-D-ribose 1-diphosphate + uracil</text>
        <dbReference type="Rhea" id="RHEA:13017"/>
        <dbReference type="ChEBI" id="CHEBI:17568"/>
        <dbReference type="ChEBI" id="CHEBI:33019"/>
        <dbReference type="ChEBI" id="CHEBI:57865"/>
        <dbReference type="ChEBI" id="CHEBI:58017"/>
        <dbReference type="EC" id="2.4.2.9"/>
    </reaction>
</comment>
<comment type="subunit">
    <text evidence="2">Homodimer and homohexamer; in equilibrium.</text>
</comment>
<comment type="similarity">
    <text evidence="2">Belongs to the purine/pyrimidine phosphoribosyltransferase family. PyrR subfamily.</text>
</comment>